<protein>
    <recommendedName>
        <fullName evidence="1">Small ribosomal subunit protein uS2</fullName>
    </recommendedName>
    <alternativeName>
        <fullName evidence="2">30S ribosomal protein S2</fullName>
    </alternativeName>
</protein>
<dbReference type="EMBL" id="CP000964">
    <property type="protein sequence ID" value="ACI11846.1"/>
    <property type="molecule type" value="Genomic_DNA"/>
</dbReference>
<dbReference type="SMR" id="B5Y1K2"/>
<dbReference type="KEGG" id="kpe:KPK_4551"/>
<dbReference type="HOGENOM" id="CLU_040318_1_0_6"/>
<dbReference type="Proteomes" id="UP000001734">
    <property type="component" value="Chromosome"/>
</dbReference>
<dbReference type="GO" id="GO:0022627">
    <property type="term" value="C:cytosolic small ribosomal subunit"/>
    <property type="evidence" value="ECO:0007669"/>
    <property type="project" value="TreeGrafter"/>
</dbReference>
<dbReference type="GO" id="GO:0003735">
    <property type="term" value="F:structural constituent of ribosome"/>
    <property type="evidence" value="ECO:0007669"/>
    <property type="project" value="InterPro"/>
</dbReference>
<dbReference type="GO" id="GO:0006412">
    <property type="term" value="P:translation"/>
    <property type="evidence" value="ECO:0007669"/>
    <property type="project" value="UniProtKB-UniRule"/>
</dbReference>
<dbReference type="CDD" id="cd01425">
    <property type="entry name" value="RPS2"/>
    <property type="match status" value="1"/>
</dbReference>
<dbReference type="FunFam" id="1.10.287.610:FF:000001">
    <property type="entry name" value="30S ribosomal protein S2"/>
    <property type="match status" value="1"/>
</dbReference>
<dbReference type="Gene3D" id="3.40.50.10490">
    <property type="entry name" value="Glucose-6-phosphate isomerase like protein, domain 1"/>
    <property type="match status" value="1"/>
</dbReference>
<dbReference type="Gene3D" id="1.10.287.610">
    <property type="entry name" value="Helix hairpin bin"/>
    <property type="match status" value="1"/>
</dbReference>
<dbReference type="HAMAP" id="MF_00291_B">
    <property type="entry name" value="Ribosomal_uS2_B"/>
    <property type="match status" value="1"/>
</dbReference>
<dbReference type="InterPro" id="IPR001865">
    <property type="entry name" value="Ribosomal_uS2"/>
</dbReference>
<dbReference type="InterPro" id="IPR005706">
    <property type="entry name" value="Ribosomal_uS2_bac/mit/plastid"/>
</dbReference>
<dbReference type="InterPro" id="IPR018130">
    <property type="entry name" value="Ribosomal_uS2_CS"/>
</dbReference>
<dbReference type="InterPro" id="IPR023591">
    <property type="entry name" value="Ribosomal_uS2_flav_dom_sf"/>
</dbReference>
<dbReference type="NCBIfam" id="TIGR01011">
    <property type="entry name" value="rpsB_bact"/>
    <property type="match status" value="1"/>
</dbReference>
<dbReference type="PANTHER" id="PTHR12534">
    <property type="entry name" value="30S RIBOSOMAL PROTEIN S2 PROKARYOTIC AND ORGANELLAR"/>
    <property type="match status" value="1"/>
</dbReference>
<dbReference type="PANTHER" id="PTHR12534:SF0">
    <property type="entry name" value="SMALL RIBOSOMAL SUBUNIT PROTEIN US2M"/>
    <property type="match status" value="1"/>
</dbReference>
<dbReference type="Pfam" id="PF00318">
    <property type="entry name" value="Ribosomal_S2"/>
    <property type="match status" value="1"/>
</dbReference>
<dbReference type="PRINTS" id="PR00395">
    <property type="entry name" value="RIBOSOMALS2"/>
</dbReference>
<dbReference type="SUPFAM" id="SSF52313">
    <property type="entry name" value="Ribosomal protein S2"/>
    <property type="match status" value="1"/>
</dbReference>
<dbReference type="PROSITE" id="PS00962">
    <property type="entry name" value="RIBOSOMAL_S2_1"/>
    <property type="match status" value="1"/>
</dbReference>
<dbReference type="PROSITE" id="PS00963">
    <property type="entry name" value="RIBOSOMAL_S2_2"/>
    <property type="match status" value="1"/>
</dbReference>
<accession>B5Y1K2</accession>
<gene>
    <name evidence="1" type="primary">rpsB</name>
    <name type="ordered locus">KPK_4551</name>
</gene>
<organism>
    <name type="scientific">Klebsiella pneumoniae (strain 342)</name>
    <dbReference type="NCBI Taxonomy" id="507522"/>
    <lineage>
        <taxon>Bacteria</taxon>
        <taxon>Pseudomonadati</taxon>
        <taxon>Pseudomonadota</taxon>
        <taxon>Gammaproteobacteria</taxon>
        <taxon>Enterobacterales</taxon>
        <taxon>Enterobacteriaceae</taxon>
        <taxon>Klebsiella/Raoultella group</taxon>
        <taxon>Klebsiella</taxon>
        <taxon>Klebsiella pneumoniae complex</taxon>
    </lineage>
</organism>
<evidence type="ECO:0000255" key="1">
    <source>
        <dbReference type="HAMAP-Rule" id="MF_00291"/>
    </source>
</evidence>
<evidence type="ECO:0000305" key="2"/>
<reference key="1">
    <citation type="journal article" date="2008" name="PLoS Genet.">
        <title>Complete genome sequence of the N2-fixing broad host range endophyte Klebsiella pneumoniae 342 and virulence predictions verified in mice.</title>
        <authorList>
            <person name="Fouts D.E."/>
            <person name="Tyler H.L."/>
            <person name="DeBoy R.T."/>
            <person name="Daugherty S."/>
            <person name="Ren Q."/>
            <person name="Badger J.H."/>
            <person name="Durkin A.S."/>
            <person name="Huot H."/>
            <person name="Shrivastava S."/>
            <person name="Kothari S."/>
            <person name="Dodson R.J."/>
            <person name="Mohamoud Y."/>
            <person name="Khouri H."/>
            <person name="Roesch L.F.W."/>
            <person name="Krogfelt K.A."/>
            <person name="Struve C."/>
            <person name="Triplett E.W."/>
            <person name="Methe B.A."/>
        </authorList>
    </citation>
    <scope>NUCLEOTIDE SEQUENCE [LARGE SCALE GENOMIC DNA]</scope>
    <source>
        <strain>342</strain>
    </source>
</reference>
<name>RS2_KLEP3</name>
<comment type="similarity">
    <text evidence="1">Belongs to the universal ribosomal protein uS2 family.</text>
</comment>
<proteinExistence type="inferred from homology"/>
<feature type="chain" id="PRO_1000115028" description="Small ribosomal subunit protein uS2">
    <location>
        <begin position="1"/>
        <end position="241"/>
    </location>
</feature>
<sequence length="241" mass="26731">MATVSMRDMLKAGVHFGHQTRYWNPKMKPFIFGARNKVHIINLEKTVPMFNEALAELNKISARKGKILFVGTKRAASEAVKEAANSCDQFFVNHRWLGGMLTNWKTVRQSIKRLKDLETQSQDGTFDKLTKKEALMRTRELDKLENSLGGIKDMGGLPDALFVIDADHEHIAIKEANNLGIPVFAIVDTNSDPDGVDFVIPGNDDAIRAVSLYLGAVAATVREGRSQDLASQAEESFVEAE</sequence>
<keyword id="KW-0687">Ribonucleoprotein</keyword>
<keyword id="KW-0689">Ribosomal protein</keyword>